<evidence type="ECO:0000305" key="1"/>
<organism>
    <name type="scientific">Staphylococcus epidermidis (strain ATCC 35984 / DSM 28319 / BCRC 17069 / CCUG 31568 / BM 3577 / RP62A)</name>
    <dbReference type="NCBI Taxonomy" id="176279"/>
    <lineage>
        <taxon>Bacteria</taxon>
        <taxon>Bacillati</taxon>
        <taxon>Bacillota</taxon>
        <taxon>Bacilli</taxon>
        <taxon>Bacillales</taxon>
        <taxon>Staphylococcaceae</taxon>
        <taxon>Staphylococcus</taxon>
    </lineage>
</organism>
<accession>Q5HLA1</accession>
<feature type="chain" id="PRO_0000277540" description="Putative NAD(P)H nitroreductase SERP2086">
    <location>
        <begin position="1"/>
        <end position="220"/>
    </location>
</feature>
<proteinExistence type="inferred from homology"/>
<dbReference type="EC" id="1.-.-.-"/>
<dbReference type="EMBL" id="CP000029">
    <property type="protein sequence ID" value="AAW52940.1"/>
    <property type="molecule type" value="Genomic_DNA"/>
</dbReference>
<dbReference type="RefSeq" id="WP_002468280.1">
    <property type="nucleotide sequence ID" value="NC_002976.3"/>
</dbReference>
<dbReference type="SMR" id="Q5HLA1"/>
<dbReference type="STRING" id="176279.SERP2086"/>
<dbReference type="KEGG" id="ser:SERP2086"/>
<dbReference type="eggNOG" id="COG0778">
    <property type="taxonomic scope" value="Bacteria"/>
</dbReference>
<dbReference type="HOGENOM" id="CLU_070764_4_1_9"/>
<dbReference type="Proteomes" id="UP000000531">
    <property type="component" value="Chromosome"/>
</dbReference>
<dbReference type="GO" id="GO:0005829">
    <property type="term" value="C:cytosol"/>
    <property type="evidence" value="ECO:0007669"/>
    <property type="project" value="TreeGrafter"/>
</dbReference>
<dbReference type="GO" id="GO:0046857">
    <property type="term" value="F:oxidoreductase activity, acting on other nitrogenous compounds as donors, with NAD or NADP as acceptor"/>
    <property type="evidence" value="ECO:0007669"/>
    <property type="project" value="TreeGrafter"/>
</dbReference>
<dbReference type="GO" id="GO:0046256">
    <property type="term" value="P:2,4,6-trinitrotoluene catabolic process"/>
    <property type="evidence" value="ECO:0007669"/>
    <property type="project" value="TreeGrafter"/>
</dbReference>
<dbReference type="CDD" id="cd02149">
    <property type="entry name" value="NfsB-like"/>
    <property type="match status" value="1"/>
</dbReference>
<dbReference type="FunFam" id="3.40.109.10:FF:000008">
    <property type="entry name" value="Putative NAD(P)H nitroreductase"/>
    <property type="match status" value="1"/>
</dbReference>
<dbReference type="Gene3D" id="3.40.109.10">
    <property type="entry name" value="NADH Oxidase"/>
    <property type="match status" value="1"/>
</dbReference>
<dbReference type="InterPro" id="IPR033878">
    <property type="entry name" value="NfsB-like"/>
</dbReference>
<dbReference type="InterPro" id="IPR029479">
    <property type="entry name" value="Nitroreductase"/>
</dbReference>
<dbReference type="InterPro" id="IPR000415">
    <property type="entry name" value="Nitroreductase-like"/>
</dbReference>
<dbReference type="InterPro" id="IPR050627">
    <property type="entry name" value="Nitroreductase/BluB"/>
</dbReference>
<dbReference type="PANTHER" id="PTHR23026">
    <property type="entry name" value="NADPH NITROREDUCTASE"/>
    <property type="match status" value="1"/>
</dbReference>
<dbReference type="PANTHER" id="PTHR23026:SF125">
    <property type="entry name" value="OXYGEN-INSENSITIVE NAD(P)H NITROREDUCTASE"/>
    <property type="match status" value="1"/>
</dbReference>
<dbReference type="Pfam" id="PF00881">
    <property type="entry name" value="Nitroreductase"/>
    <property type="match status" value="1"/>
</dbReference>
<dbReference type="SUPFAM" id="SSF55469">
    <property type="entry name" value="FMN-dependent nitroreductase-like"/>
    <property type="match status" value="1"/>
</dbReference>
<reference key="1">
    <citation type="journal article" date="2005" name="J. Bacteriol.">
        <title>Insights on evolution of virulence and resistance from the complete genome analysis of an early methicillin-resistant Staphylococcus aureus strain and a biofilm-producing methicillin-resistant Staphylococcus epidermidis strain.</title>
        <authorList>
            <person name="Gill S.R."/>
            <person name="Fouts D.E."/>
            <person name="Archer G.L."/>
            <person name="Mongodin E.F."/>
            <person name="DeBoy R.T."/>
            <person name="Ravel J."/>
            <person name="Paulsen I.T."/>
            <person name="Kolonay J.F."/>
            <person name="Brinkac L.M."/>
            <person name="Beanan M.J."/>
            <person name="Dodson R.J."/>
            <person name="Daugherty S.C."/>
            <person name="Madupu R."/>
            <person name="Angiuoli S.V."/>
            <person name="Durkin A.S."/>
            <person name="Haft D.H."/>
            <person name="Vamathevan J.J."/>
            <person name="Khouri H."/>
            <person name="Utterback T.R."/>
            <person name="Lee C."/>
            <person name="Dimitrov G."/>
            <person name="Jiang L."/>
            <person name="Qin H."/>
            <person name="Weidman J."/>
            <person name="Tran K."/>
            <person name="Kang K.H."/>
            <person name="Hance I.R."/>
            <person name="Nelson K.E."/>
            <person name="Fraser C.M."/>
        </authorList>
    </citation>
    <scope>NUCLEOTIDE SEQUENCE [LARGE SCALE GENOMIC DNA]</scope>
    <source>
        <strain>ATCC 35984 / DSM 28319 / BCRC 17069 / CCUG 31568 / BM 3577 / RP62A</strain>
    </source>
</reference>
<sequence>MNQMNQTIIDAFHFRHATKEFDPTKKISDEDFNTILETGRLSPSSLGLEPWHFVVVQNKELREKLKAYSWGAQKQLDTASHFVLIFARKNVTAHTDYVQHLLRGVKKYEESTIPAVENKFDDFQESFHIADNERTLYDWASKQTYIALANMMTSAALLGIDSCPIEGFDLDKVTEILSDEGVLDTEQFGISVMVGFGYRAQEPKHGKVRQNEDDIISWIE</sequence>
<comment type="cofactor">
    <cofactor evidence="1">
        <name>FMN</name>
        <dbReference type="ChEBI" id="CHEBI:58210"/>
    </cofactor>
</comment>
<comment type="similarity">
    <text evidence="1">Belongs to the nitroreductase family.</text>
</comment>
<gene>
    <name type="ordered locus">SERP2086</name>
</gene>
<protein>
    <recommendedName>
        <fullName>Putative NAD(P)H nitroreductase SERP2086</fullName>
        <ecNumber>1.-.-.-</ecNumber>
    </recommendedName>
</protein>
<name>Y2086_STAEQ</name>
<keyword id="KW-0285">Flavoprotein</keyword>
<keyword id="KW-0288">FMN</keyword>
<keyword id="KW-0520">NAD</keyword>
<keyword id="KW-0521">NADP</keyword>
<keyword id="KW-0560">Oxidoreductase</keyword>
<keyword id="KW-1185">Reference proteome</keyword>